<evidence type="ECO:0000256" key="1">
    <source>
        <dbReference type="SAM" id="MobiDB-lite"/>
    </source>
</evidence>
<evidence type="ECO:0000269" key="2">
    <source>
    </source>
</evidence>
<evidence type="ECO:0000269" key="3">
    <source>
    </source>
</evidence>
<evidence type="ECO:0000269" key="4">
    <source>
    </source>
</evidence>
<evidence type="ECO:0000269" key="5">
    <source>
    </source>
</evidence>
<evidence type="ECO:0000269" key="6">
    <source>
    </source>
</evidence>
<evidence type="ECO:0000269" key="7">
    <source>
    </source>
</evidence>
<evidence type="ECO:0000305" key="8"/>
<evidence type="ECO:0007744" key="9">
    <source>
    </source>
</evidence>
<evidence type="ECO:0007744" key="10">
    <source>
    </source>
</evidence>
<organism>
    <name type="scientific">Saccharomyces cerevisiae (strain ATCC 204508 / S288c)</name>
    <name type="common">Baker's yeast</name>
    <dbReference type="NCBI Taxonomy" id="559292"/>
    <lineage>
        <taxon>Eukaryota</taxon>
        <taxon>Fungi</taxon>
        <taxon>Dikarya</taxon>
        <taxon>Ascomycota</taxon>
        <taxon>Saccharomycotina</taxon>
        <taxon>Saccharomycetes</taxon>
        <taxon>Saccharomycetales</taxon>
        <taxon>Saccharomycetaceae</taxon>
        <taxon>Saccharomyces</taxon>
    </lineage>
</organism>
<reference key="1">
    <citation type="journal article" date="1997" name="Yeast">
        <title>DNA sequencing and analysis of 130 kb from yeast chromosome XV.</title>
        <authorList>
            <person name="Voss H."/>
            <person name="Benes V."/>
            <person name="Andrade M.A."/>
            <person name="Valencia A."/>
            <person name="Rechmann S."/>
            <person name="Teodoru C."/>
            <person name="Schwager C."/>
            <person name="Paces V."/>
            <person name="Sander C."/>
            <person name="Ansorge W."/>
        </authorList>
    </citation>
    <scope>NUCLEOTIDE SEQUENCE [GENOMIC DNA]</scope>
</reference>
<reference key="2">
    <citation type="journal article" date="1997" name="Nature">
        <title>The nucleotide sequence of Saccharomyces cerevisiae chromosome XV.</title>
        <authorList>
            <person name="Dujon B."/>
            <person name="Albermann K."/>
            <person name="Aldea M."/>
            <person name="Alexandraki D."/>
            <person name="Ansorge W."/>
            <person name="Arino J."/>
            <person name="Benes V."/>
            <person name="Bohn C."/>
            <person name="Bolotin-Fukuhara M."/>
            <person name="Bordonne R."/>
            <person name="Boyer J."/>
            <person name="Camasses A."/>
            <person name="Casamayor A."/>
            <person name="Casas C."/>
            <person name="Cheret G."/>
            <person name="Cziepluch C."/>
            <person name="Daignan-Fornier B."/>
            <person name="Dang V.-D."/>
            <person name="de Haan M."/>
            <person name="Delius H."/>
            <person name="Durand P."/>
            <person name="Fairhead C."/>
            <person name="Feldmann H."/>
            <person name="Gaillon L."/>
            <person name="Galisson F."/>
            <person name="Gamo F.-J."/>
            <person name="Gancedo C."/>
            <person name="Goffeau A."/>
            <person name="Goulding S.E."/>
            <person name="Grivell L.A."/>
            <person name="Habbig B."/>
            <person name="Hand N.J."/>
            <person name="Hani J."/>
            <person name="Hattenhorst U."/>
            <person name="Hebling U."/>
            <person name="Hernando Y."/>
            <person name="Herrero E."/>
            <person name="Heumann K."/>
            <person name="Hiesel R."/>
            <person name="Hilger F."/>
            <person name="Hofmann B."/>
            <person name="Hollenberg C.P."/>
            <person name="Hughes B."/>
            <person name="Jauniaux J.-C."/>
            <person name="Kalogeropoulos A."/>
            <person name="Katsoulou C."/>
            <person name="Kordes E."/>
            <person name="Lafuente M.J."/>
            <person name="Landt O."/>
            <person name="Louis E.J."/>
            <person name="Maarse A.C."/>
            <person name="Madania A."/>
            <person name="Mannhaupt G."/>
            <person name="Marck C."/>
            <person name="Martin R.P."/>
            <person name="Mewes H.-W."/>
            <person name="Michaux G."/>
            <person name="Paces V."/>
            <person name="Parle-McDermott A.G."/>
            <person name="Pearson B.M."/>
            <person name="Perrin A."/>
            <person name="Pettersson B."/>
            <person name="Poch O."/>
            <person name="Pohl T.M."/>
            <person name="Poirey R."/>
            <person name="Portetelle D."/>
            <person name="Pujol A."/>
            <person name="Purnelle B."/>
            <person name="Ramezani Rad M."/>
            <person name="Rechmann S."/>
            <person name="Schwager C."/>
            <person name="Schweizer M."/>
            <person name="Sor F."/>
            <person name="Sterky F."/>
            <person name="Tarassov I.A."/>
            <person name="Teodoru C."/>
            <person name="Tettelin H."/>
            <person name="Thierry A."/>
            <person name="Tobiasch E."/>
            <person name="Tzermia M."/>
            <person name="Uhlen M."/>
            <person name="Unseld M."/>
            <person name="Valens M."/>
            <person name="Vandenbol M."/>
            <person name="Vetter I."/>
            <person name="Vlcek C."/>
            <person name="Voet M."/>
            <person name="Volckaert G."/>
            <person name="Voss H."/>
            <person name="Wambutt R."/>
            <person name="Wedler H."/>
            <person name="Wiemann S."/>
            <person name="Winsor B."/>
            <person name="Wolfe K.H."/>
            <person name="Zollner A."/>
            <person name="Zumstein E."/>
            <person name="Kleine K."/>
        </authorList>
    </citation>
    <scope>NUCLEOTIDE SEQUENCE [LARGE SCALE GENOMIC DNA]</scope>
    <source>
        <strain>ATCC 204508 / S288c</strain>
    </source>
</reference>
<reference key="3">
    <citation type="journal article" date="2014" name="G3 (Bethesda)">
        <title>The reference genome sequence of Saccharomyces cerevisiae: Then and now.</title>
        <authorList>
            <person name="Engel S.R."/>
            <person name="Dietrich F.S."/>
            <person name="Fisk D.G."/>
            <person name="Binkley G."/>
            <person name="Balakrishnan R."/>
            <person name="Costanzo M.C."/>
            <person name="Dwight S.S."/>
            <person name="Hitz B.C."/>
            <person name="Karra K."/>
            <person name="Nash R.S."/>
            <person name="Weng S."/>
            <person name="Wong E.D."/>
            <person name="Lloyd P."/>
            <person name="Skrzypek M.S."/>
            <person name="Miyasato S.R."/>
            <person name="Simison M."/>
            <person name="Cherry J.M."/>
        </authorList>
    </citation>
    <scope>GENOME REANNOTATION</scope>
    <source>
        <strain>ATCC 204508 / S288c</strain>
    </source>
</reference>
<reference key="4">
    <citation type="journal article" date="2007" name="Genome Res.">
        <title>Approaching a complete repository of sequence-verified protein-encoding clones for Saccharomyces cerevisiae.</title>
        <authorList>
            <person name="Hu Y."/>
            <person name="Rolfs A."/>
            <person name="Bhullar B."/>
            <person name="Murthy T.V.S."/>
            <person name="Zhu C."/>
            <person name="Berger M.F."/>
            <person name="Camargo A.A."/>
            <person name="Kelley F."/>
            <person name="McCarron S."/>
            <person name="Jepson D."/>
            <person name="Richardson A."/>
            <person name="Raphael J."/>
            <person name="Moreira D."/>
            <person name="Taycher E."/>
            <person name="Zuo D."/>
            <person name="Mohr S."/>
            <person name="Kane M.F."/>
            <person name="Williamson J."/>
            <person name="Simpson A.J.G."/>
            <person name="Bulyk M.L."/>
            <person name="Harlow E."/>
            <person name="Marsischky G."/>
            <person name="Kolodner R.D."/>
            <person name="LaBaer J."/>
        </authorList>
    </citation>
    <scope>NUCLEOTIDE SEQUENCE [GENOMIC DNA]</scope>
    <source>
        <strain>ATCC 204508 / S288c</strain>
    </source>
</reference>
<reference key="5">
    <citation type="journal article" date="2003" name="Nature">
        <title>Global analysis of protein localization in budding yeast.</title>
        <authorList>
            <person name="Huh W.-K."/>
            <person name="Falvo J.V."/>
            <person name="Gerke L.C."/>
            <person name="Carroll A.S."/>
            <person name="Howson R.W."/>
            <person name="Weissman J.S."/>
            <person name="O'Shea E.K."/>
        </authorList>
    </citation>
    <scope>SUBCELLULAR LOCATION [LARGE SCALE ANALYSIS]</scope>
</reference>
<reference key="6">
    <citation type="journal article" date="2003" name="Nature">
        <title>Global analysis of protein expression in yeast.</title>
        <authorList>
            <person name="Ghaemmaghami S."/>
            <person name="Huh W.-K."/>
            <person name="Bower K."/>
            <person name="Howson R.W."/>
            <person name="Belle A."/>
            <person name="Dephoure N."/>
            <person name="O'Shea E.K."/>
            <person name="Weissman J.S."/>
        </authorList>
    </citation>
    <scope>LEVEL OF PROTEIN EXPRESSION [LARGE SCALE ANALYSIS]</scope>
</reference>
<reference key="7">
    <citation type="journal article" date="2003" name="Nature">
        <title>Targets of the cyclin-dependent kinase Cdk1.</title>
        <authorList>
            <person name="Ubersax J.A."/>
            <person name="Woodbury E.L."/>
            <person name="Quang P.N."/>
            <person name="Paraz M."/>
            <person name="Blethrow J.D."/>
            <person name="Shah K."/>
            <person name="Shokat K.M."/>
            <person name="Morgan D.O."/>
        </authorList>
    </citation>
    <scope>PHOSPHORYLATION BY CDC28</scope>
</reference>
<reference key="8">
    <citation type="journal article" date="2004" name="Cell">
        <title>Cln3 activates G1-specific transcription via phosphorylation of the SBF bound repressor Whi5.</title>
        <authorList>
            <person name="de Bruin R.A.M."/>
            <person name="McDonald W.H."/>
            <person name="Kalashnikova T.I."/>
            <person name="Yates J. III"/>
            <person name="Wittenberg C."/>
        </authorList>
    </citation>
    <scope>FUNCTION</scope>
    <scope>PHOSPHORYLATION AT THR-47; SER-59; SER-62; SER-161 AND SER-262</scope>
    <scope>INTERACTION WITH SBF</scope>
    <scope>IDENTIFICATION BY MASS SPECTROMETRY</scope>
</reference>
<reference key="9">
    <citation type="journal article" date="2004" name="Cell">
        <title>CDK activity antagonizes Whi5, an inhibitor of G1/S transcription in yeast.</title>
        <authorList>
            <person name="Costanzo M."/>
            <person name="Nishikawa J.L."/>
            <person name="Tang X."/>
            <person name="Millman J.S."/>
            <person name="Schub O."/>
            <person name="Breitkreuz K."/>
            <person name="Dewar D."/>
            <person name="Rupes I."/>
            <person name="Andrews B."/>
            <person name="Tyers M."/>
        </authorList>
    </citation>
    <scope>FUNCTION</scope>
    <scope>PHOSPHORYLATION BY CDC28</scope>
    <scope>INTERACTION WITH MBF AND SBF</scope>
    <scope>SUBCELLULAR LOCATION</scope>
</reference>
<reference key="10">
    <citation type="journal article" date="2006" name="Genes Dev.">
        <title>The Forkhead transcription factor Hcm1 regulates chromosome segregation genes and fills the S-phase gap in the transcriptional circuitry of the cell cycle.</title>
        <authorList>
            <person name="Pramila T."/>
            <person name="Wu W."/>
            <person name="Miles S."/>
            <person name="Noble W.S."/>
            <person name="Breeden L.L."/>
        </authorList>
    </citation>
    <scope>INDUCTION</scope>
</reference>
<reference key="11">
    <citation type="journal article" date="2007" name="Proc. Natl. Acad. Sci. U.S.A.">
        <title>Analysis of phosphorylation sites on proteins from Saccharomyces cerevisiae by electron transfer dissociation (ETD) mass spectrometry.</title>
        <authorList>
            <person name="Chi A."/>
            <person name="Huttenhower C."/>
            <person name="Geer L.Y."/>
            <person name="Coon J.J."/>
            <person name="Syka J.E.P."/>
            <person name="Bai D.L."/>
            <person name="Shabanowitz J."/>
            <person name="Burke D.J."/>
            <person name="Troyanskaya O.G."/>
            <person name="Hunt D.F."/>
        </authorList>
    </citation>
    <scope>IDENTIFICATION BY MASS SPECTROMETRY [LARGE SCALE ANALYSIS]</scope>
</reference>
<reference key="12">
    <citation type="journal article" date="2008" name="Mol. Cell. Proteomics">
        <title>A multidimensional chromatography technology for in-depth phosphoproteome analysis.</title>
        <authorList>
            <person name="Albuquerque C.P."/>
            <person name="Smolka M.B."/>
            <person name="Payne S.H."/>
            <person name="Bafna V."/>
            <person name="Eng J."/>
            <person name="Zhou H."/>
        </authorList>
    </citation>
    <scope>PHOSPHORYLATION [LARGE SCALE ANALYSIS] AT SER-113; SER-115; SER-154 AND SER-156</scope>
    <scope>IDENTIFICATION BY MASS SPECTROMETRY [LARGE SCALE ANALYSIS]</scope>
</reference>
<reference key="13">
    <citation type="journal article" date="2009" name="Science">
        <title>Global analysis of Cdk1 substrate phosphorylation sites provides insights into evolution.</title>
        <authorList>
            <person name="Holt L.J."/>
            <person name="Tuch B.B."/>
            <person name="Villen J."/>
            <person name="Johnson A.D."/>
            <person name="Gygi S.P."/>
            <person name="Morgan D.O."/>
        </authorList>
    </citation>
    <scope>PHOSPHORYLATION [LARGE SCALE ANALYSIS] AT THR-57; SER-59; SER-62; SER-88; SER-113; SER-115; SER-154; SER-156; SER-288 AND THR-290</scope>
    <scope>IDENTIFICATION BY MASS SPECTROMETRY [LARGE SCALE ANALYSIS]</scope>
</reference>
<gene>
    <name type="primary">WHI5</name>
    <name type="ordered locus">YOR083W</name>
    <name type="ORF">YOR3116W</name>
</gene>
<keyword id="KW-0131">Cell cycle</keyword>
<keyword id="KW-0963">Cytoplasm</keyword>
<keyword id="KW-0539">Nucleus</keyword>
<keyword id="KW-0597">Phosphoprotein</keyword>
<keyword id="KW-1185">Reference proteome</keyword>
<keyword id="KW-0678">Repressor</keyword>
<keyword id="KW-0804">Transcription</keyword>
<keyword id="KW-0805">Transcription regulation</keyword>
<dbReference type="EMBL" id="X94335">
    <property type="protein sequence ID" value="CAA64005.1"/>
    <property type="molecule type" value="Genomic_DNA"/>
</dbReference>
<dbReference type="EMBL" id="Z74990">
    <property type="protein sequence ID" value="CAA99277.1"/>
    <property type="molecule type" value="Genomic_DNA"/>
</dbReference>
<dbReference type="EMBL" id="AY558033">
    <property type="protein sequence ID" value="AAS56359.1"/>
    <property type="molecule type" value="Genomic_DNA"/>
</dbReference>
<dbReference type="EMBL" id="BK006948">
    <property type="protein sequence ID" value="DAA10861.1"/>
    <property type="molecule type" value="Genomic_DNA"/>
</dbReference>
<dbReference type="PIR" id="S61644">
    <property type="entry name" value="S61644"/>
</dbReference>
<dbReference type="RefSeq" id="NP_014726.1">
    <property type="nucleotide sequence ID" value="NM_001183502.1"/>
</dbReference>
<dbReference type="BioGRID" id="34481">
    <property type="interactions" value="394"/>
</dbReference>
<dbReference type="DIP" id="DIP-8958N"/>
<dbReference type="FunCoup" id="Q12416">
    <property type="interactions" value="225"/>
</dbReference>
<dbReference type="IntAct" id="Q12416">
    <property type="interactions" value="8"/>
</dbReference>
<dbReference type="MINT" id="Q12416"/>
<dbReference type="STRING" id="4932.YOR083W"/>
<dbReference type="CarbonylDB" id="Q12416"/>
<dbReference type="iPTMnet" id="Q12416"/>
<dbReference type="PaxDb" id="4932-YOR083W"/>
<dbReference type="PeptideAtlas" id="Q12416"/>
<dbReference type="EnsemblFungi" id="YOR083W_mRNA">
    <property type="protein sequence ID" value="YOR083W"/>
    <property type="gene ID" value="YOR083W"/>
</dbReference>
<dbReference type="GeneID" id="854249"/>
<dbReference type="KEGG" id="sce:YOR083W"/>
<dbReference type="AGR" id="SGD:S000005609"/>
<dbReference type="SGD" id="S000005609">
    <property type="gene designation" value="WHI5"/>
</dbReference>
<dbReference type="VEuPathDB" id="FungiDB:YOR083W"/>
<dbReference type="eggNOG" id="ENOG502RW1U">
    <property type="taxonomic scope" value="Eukaryota"/>
</dbReference>
<dbReference type="HOGENOM" id="CLU_082190_0_0_1"/>
<dbReference type="InParanoid" id="Q12416"/>
<dbReference type="OMA" id="DENEENX"/>
<dbReference type="OrthoDB" id="2359117at2759"/>
<dbReference type="BioCyc" id="YEAST:G3O-33619-MONOMER"/>
<dbReference type="BioGRID-ORCS" id="854249">
    <property type="hits" value="7 hits in 10 CRISPR screens"/>
</dbReference>
<dbReference type="PRO" id="PR:Q12416"/>
<dbReference type="Proteomes" id="UP000002311">
    <property type="component" value="Chromosome XV"/>
</dbReference>
<dbReference type="RNAct" id="Q12416">
    <property type="molecule type" value="protein"/>
</dbReference>
<dbReference type="GO" id="GO:0005737">
    <property type="term" value="C:cytoplasm"/>
    <property type="evidence" value="ECO:0000314"/>
    <property type="project" value="SGD"/>
</dbReference>
<dbReference type="GO" id="GO:0005634">
    <property type="term" value="C:nucleus"/>
    <property type="evidence" value="ECO:0000314"/>
    <property type="project" value="SGD"/>
</dbReference>
<dbReference type="GO" id="GO:0033309">
    <property type="term" value="C:SBF transcription complex"/>
    <property type="evidence" value="ECO:0000314"/>
    <property type="project" value="SGD"/>
</dbReference>
<dbReference type="GO" id="GO:0061629">
    <property type="term" value="F:RNA polymerase II-specific DNA-binding transcription factor binding"/>
    <property type="evidence" value="ECO:0000314"/>
    <property type="project" value="SGD"/>
</dbReference>
<dbReference type="GO" id="GO:0003712">
    <property type="term" value="F:transcription coregulator activity"/>
    <property type="evidence" value="ECO:0000318"/>
    <property type="project" value="GO_Central"/>
</dbReference>
<dbReference type="GO" id="GO:0003714">
    <property type="term" value="F:transcription corepressor activity"/>
    <property type="evidence" value="ECO:0000314"/>
    <property type="project" value="SGD"/>
</dbReference>
<dbReference type="GO" id="GO:0000082">
    <property type="term" value="P:G1/S transition of mitotic cell cycle"/>
    <property type="evidence" value="ECO:0000315"/>
    <property type="project" value="SGD"/>
</dbReference>
<dbReference type="GO" id="GO:0000122">
    <property type="term" value="P:negative regulation of transcription by RNA polymerase II"/>
    <property type="evidence" value="ECO:0000315"/>
    <property type="project" value="SGD"/>
</dbReference>
<dbReference type="GO" id="GO:0008361">
    <property type="term" value="P:regulation of cell size"/>
    <property type="evidence" value="ECO:0007001"/>
    <property type="project" value="SGD"/>
</dbReference>
<dbReference type="GO" id="GO:0006357">
    <property type="term" value="P:regulation of transcription by RNA polymerase II"/>
    <property type="evidence" value="ECO:0000316"/>
    <property type="project" value="SGD"/>
</dbReference>
<dbReference type="GO" id="GO:0007089">
    <property type="term" value="P:traversing start control point of mitotic cell cycle"/>
    <property type="evidence" value="ECO:0000315"/>
    <property type="project" value="SGD"/>
</dbReference>
<dbReference type="InterPro" id="IPR039198">
    <property type="entry name" value="Srl3/Whi5"/>
</dbReference>
<dbReference type="InterPro" id="IPR013734">
    <property type="entry name" value="TF_Nrm1/Whi5"/>
</dbReference>
<dbReference type="PANTHER" id="PTHR28246">
    <property type="entry name" value="G1-SPECIFIC TRANSCRIPTIONAL REPRESSOR WHI5-RELATED"/>
    <property type="match status" value="1"/>
</dbReference>
<dbReference type="PANTHER" id="PTHR28246:SF1">
    <property type="entry name" value="G1-SPECIFIC TRANSCRIPTIONAL REPRESSOR WHI5-RELATED"/>
    <property type="match status" value="1"/>
</dbReference>
<dbReference type="Pfam" id="PF08528">
    <property type="entry name" value="Whi5"/>
    <property type="match status" value="1"/>
</dbReference>
<name>WHI5_YEAST</name>
<sequence length="295" mass="32901">MSLRTPKRSRTSDEQEQEQEQEQVQNPDTHVNNEHQQRPGPTTLLSTPVRLKNGFGTPSPPSPPGITKSITKSRRRPSTTSLQGIFMSPVNKRRVGITAHGRVYDHNDDGHESESEDDENEEENENQKKYDGHVSMPLLPPTTPKSRRSEVFLSPSPRLRSPPTAARRSTGERPIREISHTLRTRLNYALVKLQNGWTDKTLPELETELAPAVQTPPRRYHNRFPDSADAGTSAHTAFLQALGGHPPREEATAVETLMLLSSPTKKQQHRPVPATSAGEPTDETEPESDTEVETS</sequence>
<protein>
    <recommendedName>
        <fullName>G1-specific transcriptional repressor WHI5</fullName>
    </recommendedName>
</protein>
<accession>Q12416</accession>
<accession>D6W2E5</accession>
<feature type="chain" id="PRO_0000262757" description="G1-specific transcriptional repressor WHI5">
    <location>
        <begin position="1"/>
        <end position="295"/>
    </location>
</feature>
<feature type="region of interest" description="Disordered" evidence="1">
    <location>
        <begin position="1"/>
        <end position="171"/>
    </location>
</feature>
<feature type="region of interest" description="Disordered" evidence="1">
    <location>
        <begin position="249"/>
        <end position="295"/>
    </location>
</feature>
<feature type="compositionally biased region" description="Basic and acidic residues" evidence="1">
    <location>
        <begin position="102"/>
        <end position="113"/>
    </location>
</feature>
<feature type="compositionally biased region" description="Acidic residues" evidence="1">
    <location>
        <begin position="114"/>
        <end position="124"/>
    </location>
</feature>
<feature type="compositionally biased region" description="Low complexity" evidence="1">
    <location>
        <begin position="153"/>
        <end position="168"/>
    </location>
</feature>
<feature type="compositionally biased region" description="Acidic residues" evidence="1">
    <location>
        <begin position="280"/>
        <end position="295"/>
    </location>
</feature>
<feature type="modified residue" description="Phosphothreonine" evidence="5">
    <location>
        <position position="47"/>
    </location>
</feature>
<feature type="modified residue" description="Phosphothreonine" evidence="10">
    <location>
        <position position="57"/>
    </location>
</feature>
<feature type="modified residue" description="Phosphoserine" evidence="5 10">
    <location>
        <position position="59"/>
    </location>
</feature>
<feature type="modified residue" description="Phosphoserine" evidence="5 10">
    <location>
        <position position="62"/>
    </location>
</feature>
<feature type="modified residue" description="Phosphoserine" evidence="10">
    <location>
        <position position="88"/>
    </location>
</feature>
<feature type="modified residue" description="Phosphoserine" evidence="9 10">
    <location>
        <position position="113"/>
    </location>
</feature>
<feature type="modified residue" description="Phosphoserine" evidence="9 10">
    <location>
        <position position="115"/>
    </location>
</feature>
<feature type="modified residue" description="Phosphoserine" evidence="9 10">
    <location>
        <position position="154"/>
    </location>
</feature>
<feature type="modified residue" description="Phosphoserine" evidence="9 10">
    <location>
        <position position="156"/>
    </location>
</feature>
<feature type="modified residue" description="Phosphoserine" evidence="5">
    <location>
        <position position="161"/>
    </location>
</feature>
<feature type="modified residue" description="Phosphoserine" evidence="5">
    <location>
        <position position="262"/>
    </location>
</feature>
<feature type="modified residue" description="Phosphoserine" evidence="10">
    <location>
        <position position="288"/>
    </location>
</feature>
<feature type="modified residue" description="Phosphothreonine" evidence="10">
    <location>
        <position position="290"/>
    </location>
</feature>
<proteinExistence type="evidence at protein level"/>
<comment type="function">
    <text evidence="5 6">Transcriptional repressor that negatively regulates G1-specific, SBF- and MBF-dependent transcription. Binds via SBF to promoters of G1-specific genes to repress transcription in early G1. During G1, phosphorylated by cyclin-CDK CLN3-CDC28 and progressively hyperphosphorylated by CDK associated with other G1-cyclins, which leads to dissociation of WHI5 from SBF, activating SBF-dependent transcription in late G1. Elimination of CDK activity at the end of mitosis by the mitotic exit network (MEN) allows WHI5 to reassociate with SBF to again repress G1/S transcription.</text>
</comment>
<comment type="subunit">
    <text evidence="5 6">Interacts with the heterodimeric transcription factors SBF (SWI4-SWI6 cell-cycle box binding factor) and MBF (MluI cell-cycle box binding factor), each composed of the transcriptional coactivator SWI6 and a sequence-specific DNA-binding protein SWI4 or MBP1, respectively.</text>
</comment>
<comment type="subcellular location">
    <subcellularLocation>
        <location evidence="2">Cytoplasm</location>
    </subcellularLocation>
    <subcellularLocation>
        <location evidence="6">Nucleus</location>
    </subcellularLocation>
    <text evidence="6">Shuttles in a cell cycle-regulated manner. Localizes to the nucleus, where it is associated with SBF-dependent promoters. In late G1 phase, phosphorylation by G1-specific cyclin-CDK causes its export to the cytoplasm. Elimination of CDK activity at the end of mitosis allows WHI5 to reenter the nucleus.</text>
</comment>
<comment type="induction">
    <text evidence="7">By transcription factor HCM1 during S phase.</text>
</comment>
<comment type="PTM">
    <text evidence="4 5 6">Phosphorylation by the cyclin-dependent kinase (CDK) CDC28 controls both subcellular location and association of WHI5 with SBF.</text>
</comment>
<comment type="miscellaneous">
    <text evidence="3">Present with 1440 molecules/cell in log phase SD medium.</text>
</comment>
<comment type="similarity">
    <text evidence="8">Belongs to the WHI5/NRM1 family.</text>
</comment>